<dbReference type="EMBL" id="AE016826">
    <property type="protein sequence ID" value="AAO26746.1"/>
    <property type="molecule type" value="Genomic_DNA"/>
</dbReference>
<dbReference type="RefSeq" id="WP_011091147.1">
    <property type="nucleotide sequence ID" value="NC_004545.1"/>
</dbReference>
<dbReference type="SMR" id="Q89B45"/>
<dbReference type="STRING" id="224915.bbp_002"/>
<dbReference type="KEGG" id="bab:bbp_002"/>
<dbReference type="eggNOG" id="COG0356">
    <property type="taxonomic scope" value="Bacteria"/>
</dbReference>
<dbReference type="HOGENOM" id="CLU_041018_1_0_6"/>
<dbReference type="OrthoDB" id="9789241at2"/>
<dbReference type="Proteomes" id="UP000000601">
    <property type="component" value="Chromosome"/>
</dbReference>
<dbReference type="GO" id="GO:0005886">
    <property type="term" value="C:plasma membrane"/>
    <property type="evidence" value="ECO:0007669"/>
    <property type="project" value="UniProtKB-SubCell"/>
</dbReference>
<dbReference type="GO" id="GO:0045259">
    <property type="term" value="C:proton-transporting ATP synthase complex"/>
    <property type="evidence" value="ECO:0007669"/>
    <property type="project" value="UniProtKB-KW"/>
</dbReference>
<dbReference type="GO" id="GO:0046933">
    <property type="term" value="F:proton-transporting ATP synthase activity, rotational mechanism"/>
    <property type="evidence" value="ECO:0007669"/>
    <property type="project" value="UniProtKB-UniRule"/>
</dbReference>
<dbReference type="GO" id="GO:0042777">
    <property type="term" value="P:proton motive force-driven plasma membrane ATP synthesis"/>
    <property type="evidence" value="ECO:0007669"/>
    <property type="project" value="TreeGrafter"/>
</dbReference>
<dbReference type="CDD" id="cd00310">
    <property type="entry name" value="ATP-synt_Fo_a_6"/>
    <property type="match status" value="1"/>
</dbReference>
<dbReference type="FunFam" id="1.20.120.220:FF:000002">
    <property type="entry name" value="ATP synthase subunit a"/>
    <property type="match status" value="1"/>
</dbReference>
<dbReference type="Gene3D" id="1.20.120.220">
    <property type="entry name" value="ATP synthase, F0 complex, subunit A"/>
    <property type="match status" value="1"/>
</dbReference>
<dbReference type="HAMAP" id="MF_01393">
    <property type="entry name" value="ATP_synth_a_bact"/>
    <property type="match status" value="1"/>
</dbReference>
<dbReference type="InterPro" id="IPR045082">
    <property type="entry name" value="ATP_syn_F0_a_bact/chloroplast"/>
</dbReference>
<dbReference type="InterPro" id="IPR000568">
    <property type="entry name" value="ATP_synth_F0_asu"/>
</dbReference>
<dbReference type="InterPro" id="IPR023011">
    <property type="entry name" value="ATP_synth_F0_asu_AS"/>
</dbReference>
<dbReference type="InterPro" id="IPR035908">
    <property type="entry name" value="F0_ATP_A_sf"/>
</dbReference>
<dbReference type="NCBIfam" id="TIGR01131">
    <property type="entry name" value="ATP_synt_6_or_A"/>
    <property type="match status" value="1"/>
</dbReference>
<dbReference type="NCBIfam" id="NF004477">
    <property type="entry name" value="PRK05815.1-1"/>
    <property type="match status" value="1"/>
</dbReference>
<dbReference type="PANTHER" id="PTHR42823">
    <property type="entry name" value="ATP SYNTHASE SUBUNIT A, CHLOROPLASTIC"/>
    <property type="match status" value="1"/>
</dbReference>
<dbReference type="PANTHER" id="PTHR42823:SF3">
    <property type="entry name" value="ATP SYNTHASE SUBUNIT A, CHLOROPLASTIC"/>
    <property type="match status" value="1"/>
</dbReference>
<dbReference type="Pfam" id="PF00119">
    <property type="entry name" value="ATP-synt_A"/>
    <property type="match status" value="1"/>
</dbReference>
<dbReference type="SUPFAM" id="SSF81336">
    <property type="entry name" value="F1F0 ATP synthase subunit A"/>
    <property type="match status" value="1"/>
</dbReference>
<dbReference type="PROSITE" id="PS00449">
    <property type="entry name" value="ATPASE_A"/>
    <property type="match status" value="1"/>
</dbReference>
<reference key="1">
    <citation type="journal article" date="2003" name="Proc. Natl. Acad. Sci. U.S.A.">
        <title>Reductive genome evolution in Buchnera aphidicola.</title>
        <authorList>
            <person name="van Ham R.C.H.J."/>
            <person name="Kamerbeek J."/>
            <person name="Palacios C."/>
            <person name="Rausell C."/>
            <person name="Abascal F."/>
            <person name="Bastolla U."/>
            <person name="Fernandez J.M."/>
            <person name="Jimenez L."/>
            <person name="Postigo M."/>
            <person name="Silva F.J."/>
            <person name="Tamames J."/>
            <person name="Viguera E."/>
            <person name="Latorre A."/>
            <person name="Valencia A."/>
            <person name="Moran F."/>
            <person name="Moya A."/>
        </authorList>
    </citation>
    <scope>NUCLEOTIDE SEQUENCE [LARGE SCALE GENOMIC DNA]</scope>
    <source>
        <strain>Bp</strain>
    </source>
</reference>
<proteinExistence type="inferred from homology"/>
<keyword id="KW-0066">ATP synthesis</keyword>
<keyword id="KW-1003">Cell membrane</keyword>
<keyword id="KW-0138">CF(0)</keyword>
<keyword id="KW-0375">Hydrogen ion transport</keyword>
<keyword id="KW-0406">Ion transport</keyword>
<keyword id="KW-0472">Membrane</keyword>
<keyword id="KW-1185">Reference proteome</keyword>
<keyword id="KW-0812">Transmembrane</keyword>
<keyword id="KW-1133">Transmembrane helix</keyword>
<keyword id="KW-0813">Transport</keyword>
<organism>
    <name type="scientific">Buchnera aphidicola subsp. Baizongia pistaciae (strain Bp)</name>
    <dbReference type="NCBI Taxonomy" id="224915"/>
    <lineage>
        <taxon>Bacteria</taxon>
        <taxon>Pseudomonadati</taxon>
        <taxon>Pseudomonadota</taxon>
        <taxon>Gammaproteobacteria</taxon>
        <taxon>Enterobacterales</taxon>
        <taxon>Erwiniaceae</taxon>
        <taxon>Buchnera</taxon>
    </lineage>
</organism>
<gene>
    <name evidence="1" type="primary">atpB</name>
    <name type="ordered locus">bbp_002</name>
</gene>
<sequence>MNLEHNFNLPNYINHHLHHLQLNLSNLKFLNFNDNYIRNFWVCNFDSIFLSIFLGLVILISFFKISKTFTIQTPNKIQICIELIIDFINNNVKEIYHGKNKLIAPLSLTIFVWIFLMNLMDLIPIDLVPFIFQNFFETQIPIKLVPTTDVNITISMSLVVFLLIIFYSIKIKGIKGFLKDLFLQPFHNPIFFVFNFILESISLLSKPVSLGLRLFGNMYAGEMIFILISGLLPWWLQWILSVPWAIFHILIISLQSFIFMVLTIVYLSMASTKH</sequence>
<name>ATP6_BUCBP</name>
<evidence type="ECO:0000255" key="1">
    <source>
        <dbReference type="HAMAP-Rule" id="MF_01393"/>
    </source>
</evidence>
<protein>
    <recommendedName>
        <fullName evidence="1">ATP synthase subunit a</fullName>
    </recommendedName>
    <alternativeName>
        <fullName evidence="1">ATP synthase F0 sector subunit a</fullName>
    </alternativeName>
    <alternativeName>
        <fullName evidence="1">F-ATPase subunit 6</fullName>
    </alternativeName>
</protein>
<comment type="function">
    <text evidence="1">Key component of the proton channel; it plays a direct role in the translocation of protons across the membrane.</text>
</comment>
<comment type="subunit">
    <text evidence="1">F-type ATPases have 2 components, CF(1) - the catalytic core - and CF(0) - the membrane proton channel. CF(1) has five subunits: alpha(3), beta(3), gamma(1), delta(1), epsilon(1). CF(0) has three main subunits: a(1), b(2) and c(9-12). The alpha and beta chains form an alternating ring which encloses part of the gamma chain. CF(1) is attached to CF(0) by a central stalk formed by the gamma and epsilon chains, while a peripheral stalk is formed by the delta and b chains.</text>
</comment>
<comment type="subcellular location">
    <subcellularLocation>
        <location evidence="1">Cell membrane</location>
        <topology evidence="1">Multi-pass membrane protein</topology>
    </subcellularLocation>
</comment>
<comment type="similarity">
    <text evidence="1">Belongs to the ATPase A chain family.</text>
</comment>
<accession>Q89B45</accession>
<feature type="chain" id="PRO_0000082051" description="ATP synthase subunit a">
    <location>
        <begin position="1"/>
        <end position="274"/>
    </location>
</feature>
<feature type="transmembrane region" description="Helical" evidence="1">
    <location>
        <begin position="40"/>
        <end position="60"/>
    </location>
</feature>
<feature type="transmembrane region" description="Helical" evidence="1">
    <location>
        <begin position="110"/>
        <end position="130"/>
    </location>
</feature>
<feature type="transmembrane region" description="Helical" evidence="1">
    <location>
        <begin position="149"/>
        <end position="169"/>
    </location>
</feature>
<feature type="transmembrane region" description="Helical" evidence="1">
    <location>
        <begin position="224"/>
        <end position="244"/>
    </location>
</feature>
<feature type="transmembrane region" description="Helical" evidence="1">
    <location>
        <begin position="245"/>
        <end position="265"/>
    </location>
</feature>